<evidence type="ECO:0000255" key="1">
    <source>
        <dbReference type="HAMAP-Rule" id="MF_00147"/>
    </source>
</evidence>
<gene>
    <name evidence="1" type="primary">tpiA</name>
    <name type="ordered locus">CGSHiEE_08705</name>
</gene>
<name>TPIS_HAEIE</name>
<organism>
    <name type="scientific">Haemophilus influenzae (strain PittEE)</name>
    <dbReference type="NCBI Taxonomy" id="374930"/>
    <lineage>
        <taxon>Bacteria</taxon>
        <taxon>Pseudomonadati</taxon>
        <taxon>Pseudomonadota</taxon>
        <taxon>Gammaproteobacteria</taxon>
        <taxon>Pasteurellales</taxon>
        <taxon>Pasteurellaceae</taxon>
        <taxon>Haemophilus</taxon>
    </lineage>
</organism>
<reference key="1">
    <citation type="journal article" date="2007" name="Genome Biol.">
        <title>Characterization and modeling of the Haemophilus influenzae core and supragenomes based on the complete genomic sequences of Rd and 12 clinical nontypeable strains.</title>
        <authorList>
            <person name="Hogg J.S."/>
            <person name="Hu F.Z."/>
            <person name="Janto B."/>
            <person name="Boissy R."/>
            <person name="Hayes J."/>
            <person name="Keefe R."/>
            <person name="Post J.C."/>
            <person name="Ehrlich G.D."/>
        </authorList>
    </citation>
    <scope>NUCLEOTIDE SEQUENCE [LARGE SCALE GENOMIC DNA]</scope>
    <source>
        <strain>PittEE</strain>
    </source>
</reference>
<proteinExistence type="inferred from homology"/>
<sequence>MARRPLVMGNWKLNGSKAFTKELIEGLKAELHDVTGCDVAIAPPVMYLGTAEAALSGCGCNCGGKSVIQLGAQNVDINVKGAFTGDISTEMLKDFGAKYIIIGHSERRTYHKESDEFVAKKFGALKEAGLVPVLCIGESEAENEAGKTEEVCARQIDAVINALGVEAFNGAVIAYEPIWAIGTGKSATPAQAQAVHAFIRGHIAAKSQAVAEQVIIQYGGSVNDANAAELFTQPDIDGALVGGASLKAPAFAVIVKAAAAAKN</sequence>
<keyword id="KW-0963">Cytoplasm</keyword>
<keyword id="KW-0312">Gluconeogenesis</keyword>
<keyword id="KW-0324">Glycolysis</keyword>
<keyword id="KW-0413">Isomerase</keyword>
<dbReference type="EC" id="5.3.1.1" evidence="1"/>
<dbReference type="EMBL" id="CP000671">
    <property type="protein sequence ID" value="ABQ99040.1"/>
    <property type="molecule type" value="Genomic_DNA"/>
</dbReference>
<dbReference type="SMR" id="A5UE39"/>
<dbReference type="KEGG" id="hip:CGSHiEE_08705"/>
<dbReference type="HOGENOM" id="CLU_024251_2_1_6"/>
<dbReference type="UniPathway" id="UPA00109">
    <property type="reaction ID" value="UER00189"/>
</dbReference>
<dbReference type="UniPathway" id="UPA00138"/>
<dbReference type="GO" id="GO:0005829">
    <property type="term" value="C:cytosol"/>
    <property type="evidence" value="ECO:0007669"/>
    <property type="project" value="TreeGrafter"/>
</dbReference>
<dbReference type="GO" id="GO:0004807">
    <property type="term" value="F:triose-phosphate isomerase activity"/>
    <property type="evidence" value="ECO:0007669"/>
    <property type="project" value="UniProtKB-UniRule"/>
</dbReference>
<dbReference type="GO" id="GO:0006094">
    <property type="term" value="P:gluconeogenesis"/>
    <property type="evidence" value="ECO:0007669"/>
    <property type="project" value="UniProtKB-UniRule"/>
</dbReference>
<dbReference type="GO" id="GO:0046166">
    <property type="term" value="P:glyceraldehyde-3-phosphate biosynthetic process"/>
    <property type="evidence" value="ECO:0007669"/>
    <property type="project" value="TreeGrafter"/>
</dbReference>
<dbReference type="GO" id="GO:0019563">
    <property type="term" value="P:glycerol catabolic process"/>
    <property type="evidence" value="ECO:0007669"/>
    <property type="project" value="TreeGrafter"/>
</dbReference>
<dbReference type="GO" id="GO:0006096">
    <property type="term" value="P:glycolytic process"/>
    <property type="evidence" value="ECO:0007669"/>
    <property type="project" value="UniProtKB-UniRule"/>
</dbReference>
<dbReference type="CDD" id="cd00311">
    <property type="entry name" value="TIM"/>
    <property type="match status" value="1"/>
</dbReference>
<dbReference type="FunFam" id="3.20.20.70:FF:000020">
    <property type="entry name" value="Triosephosphate isomerase"/>
    <property type="match status" value="1"/>
</dbReference>
<dbReference type="Gene3D" id="3.20.20.70">
    <property type="entry name" value="Aldolase class I"/>
    <property type="match status" value="1"/>
</dbReference>
<dbReference type="HAMAP" id="MF_00147_B">
    <property type="entry name" value="TIM_B"/>
    <property type="match status" value="1"/>
</dbReference>
<dbReference type="InterPro" id="IPR013785">
    <property type="entry name" value="Aldolase_TIM"/>
</dbReference>
<dbReference type="InterPro" id="IPR035990">
    <property type="entry name" value="TIM_sf"/>
</dbReference>
<dbReference type="InterPro" id="IPR022896">
    <property type="entry name" value="TrioseP_Isoase_bac/euk"/>
</dbReference>
<dbReference type="InterPro" id="IPR000652">
    <property type="entry name" value="Triosephosphate_isomerase"/>
</dbReference>
<dbReference type="InterPro" id="IPR020861">
    <property type="entry name" value="Triosephosphate_isomerase_AS"/>
</dbReference>
<dbReference type="NCBIfam" id="TIGR00419">
    <property type="entry name" value="tim"/>
    <property type="match status" value="1"/>
</dbReference>
<dbReference type="PANTHER" id="PTHR21139">
    <property type="entry name" value="TRIOSEPHOSPHATE ISOMERASE"/>
    <property type="match status" value="1"/>
</dbReference>
<dbReference type="PANTHER" id="PTHR21139:SF42">
    <property type="entry name" value="TRIOSEPHOSPHATE ISOMERASE"/>
    <property type="match status" value="1"/>
</dbReference>
<dbReference type="Pfam" id="PF00121">
    <property type="entry name" value="TIM"/>
    <property type="match status" value="1"/>
</dbReference>
<dbReference type="SUPFAM" id="SSF51351">
    <property type="entry name" value="Triosephosphate isomerase (TIM)"/>
    <property type="match status" value="1"/>
</dbReference>
<dbReference type="PROSITE" id="PS00171">
    <property type="entry name" value="TIM_1"/>
    <property type="match status" value="1"/>
</dbReference>
<dbReference type="PROSITE" id="PS51440">
    <property type="entry name" value="TIM_2"/>
    <property type="match status" value="1"/>
</dbReference>
<protein>
    <recommendedName>
        <fullName evidence="1">Triosephosphate isomerase</fullName>
        <shortName evidence="1">TIM</shortName>
        <shortName evidence="1">TPI</shortName>
        <ecNumber evidence="1">5.3.1.1</ecNumber>
    </recommendedName>
    <alternativeName>
        <fullName evidence="1">Triose-phosphate isomerase</fullName>
    </alternativeName>
</protein>
<comment type="function">
    <text evidence="1">Involved in the gluconeogenesis. Catalyzes stereospecifically the conversion of dihydroxyacetone phosphate (DHAP) to D-glyceraldehyde-3-phosphate (G3P).</text>
</comment>
<comment type="catalytic activity">
    <reaction evidence="1">
        <text>D-glyceraldehyde 3-phosphate = dihydroxyacetone phosphate</text>
        <dbReference type="Rhea" id="RHEA:18585"/>
        <dbReference type="ChEBI" id="CHEBI:57642"/>
        <dbReference type="ChEBI" id="CHEBI:59776"/>
        <dbReference type="EC" id="5.3.1.1"/>
    </reaction>
</comment>
<comment type="pathway">
    <text evidence="1">Carbohydrate biosynthesis; gluconeogenesis.</text>
</comment>
<comment type="pathway">
    <text evidence="1">Carbohydrate degradation; glycolysis; D-glyceraldehyde 3-phosphate from glycerone phosphate: step 1/1.</text>
</comment>
<comment type="subunit">
    <text evidence="1">Homodimer.</text>
</comment>
<comment type="subcellular location">
    <subcellularLocation>
        <location evidence="1">Cytoplasm</location>
    </subcellularLocation>
</comment>
<comment type="similarity">
    <text evidence="1">Belongs to the triosephosphate isomerase family.</text>
</comment>
<feature type="chain" id="PRO_0000307474" description="Triosephosphate isomerase">
    <location>
        <begin position="1"/>
        <end position="263"/>
    </location>
</feature>
<feature type="active site" description="Electrophile" evidence="1">
    <location>
        <position position="104"/>
    </location>
</feature>
<feature type="active site" description="Proton acceptor" evidence="1">
    <location>
        <position position="176"/>
    </location>
</feature>
<feature type="binding site" evidence="1">
    <location>
        <begin position="10"/>
        <end position="12"/>
    </location>
    <ligand>
        <name>substrate</name>
    </ligand>
</feature>
<feature type="binding site" evidence="1">
    <location>
        <position position="182"/>
    </location>
    <ligand>
        <name>substrate</name>
    </ligand>
</feature>
<feature type="binding site" evidence="1">
    <location>
        <position position="221"/>
    </location>
    <ligand>
        <name>substrate</name>
    </ligand>
</feature>
<feature type="binding site" evidence="1">
    <location>
        <begin position="242"/>
        <end position="243"/>
    </location>
    <ligand>
        <name>substrate</name>
    </ligand>
</feature>
<accession>A5UE39</accession>